<comment type="function">
    <text evidence="1">May bind long-chain fatty acids, such as palmitate, and may play a role in lipid transport or fatty acid metabolism.</text>
</comment>
<proteinExistence type="inferred from homology"/>
<organism>
    <name type="scientific">Streptococcus pneumoniae serotype 4 (strain ATCC BAA-334 / TIGR4)</name>
    <dbReference type="NCBI Taxonomy" id="170187"/>
    <lineage>
        <taxon>Bacteria</taxon>
        <taxon>Bacillati</taxon>
        <taxon>Bacillota</taxon>
        <taxon>Bacilli</taxon>
        <taxon>Lactobacillales</taxon>
        <taxon>Streptococcaceae</taxon>
        <taxon>Streptococcus</taxon>
    </lineage>
</organism>
<keyword id="KW-0446">Lipid-binding</keyword>
<keyword id="KW-1185">Reference proteome</keyword>
<name>Y742_STRPN</name>
<accession>Q97RQ6</accession>
<feature type="chain" id="PRO_0000209794" description="DegV domain-containing protein SP_0742">
    <location>
        <begin position="1"/>
        <end position="281"/>
    </location>
</feature>
<feature type="domain" description="DegV" evidence="3">
    <location>
        <begin position="3"/>
        <end position="280"/>
    </location>
</feature>
<feature type="binding site" evidence="2">
    <location>
        <position position="63"/>
    </location>
    <ligand>
        <name>hexadecanoate</name>
        <dbReference type="ChEBI" id="CHEBI:7896"/>
    </ligand>
</feature>
<feature type="binding site" evidence="2">
    <location>
        <position position="91"/>
    </location>
    <ligand>
        <name>hexadecanoate</name>
        <dbReference type="ChEBI" id="CHEBI:7896"/>
    </ligand>
</feature>
<protein>
    <recommendedName>
        <fullName>DegV domain-containing protein SP_0742</fullName>
    </recommendedName>
</protein>
<evidence type="ECO:0000250" key="1"/>
<evidence type="ECO:0000250" key="2">
    <source>
        <dbReference type="UniProtKB" id="Q9X1H9"/>
    </source>
</evidence>
<evidence type="ECO:0000255" key="3">
    <source>
        <dbReference type="PROSITE-ProRule" id="PRU00815"/>
    </source>
</evidence>
<gene>
    <name type="ordered locus">SP_0742</name>
</gene>
<reference key="1">
    <citation type="journal article" date="2001" name="Science">
        <title>Complete genome sequence of a virulent isolate of Streptococcus pneumoniae.</title>
        <authorList>
            <person name="Tettelin H."/>
            <person name="Nelson K.E."/>
            <person name="Paulsen I.T."/>
            <person name="Eisen J.A."/>
            <person name="Read T.D."/>
            <person name="Peterson S.N."/>
            <person name="Heidelberg J.F."/>
            <person name="DeBoy R.T."/>
            <person name="Haft D.H."/>
            <person name="Dodson R.J."/>
            <person name="Durkin A.S."/>
            <person name="Gwinn M.L."/>
            <person name="Kolonay J.F."/>
            <person name="Nelson W.C."/>
            <person name="Peterson J.D."/>
            <person name="Umayam L.A."/>
            <person name="White O."/>
            <person name="Salzberg S.L."/>
            <person name="Lewis M.R."/>
            <person name="Radune D."/>
            <person name="Holtzapple E.K."/>
            <person name="Khouri H.M."/>
            <person name="Wolf A.M."/>
            <person name="Utterback T.R."/>
            <person name="Hansen C.L."/>
            <person name="McDonald L.A."/>
            <person name="Feldblyum T.V."/>
            <person name="Angiuoli S.V."/>
            <person name="Dickinson T."/>
            <person name="Hickey E.K."/>
            <person name="Holt I.E."/>
            <person name="Loftus B.J."/>
            <person name="Yang F."/>
            <person name="Smith H.O."/>
            <person name="Venter J.C."/>
            <person name="Dougherty B.A."/>
            <person name="Morrison D.A."/>
            <person name="Hollingshead S.K."/>
            <person name="Fraser C.M."/>
        </authorList>
    </citation>
    <scope>NUCLEOTIDE SEQUENCE [LARGE SCALE GENOMIC DNA]</scope>
    <source>
        <strain>ATCC BAA-334 / TIGR4</strain>
    </source>
</reference>
<sequence>MTWKIIADSGCDYRQLPTPAINTTFVSVPLTIQVADQVFVDDASLDIDQMMETMYATAEASKSACPSPDDYLRAFEGAKNIFLVTITGTLSGSHNSAQLAKNIYLEDHPDTKIHVIDSLSAGGEVDLLVEKLNDLIDQGLSFEEVVEAITAYQEKTKLLFVLAKVDNLVKNGRLSKLIGTVVGLLNIRMVGKASETGTLELLQKARGSKKSVQAAYDELVKAGYAGGRIVMAQRNNEKCCQQLSERIRETFPQADIKILPTSGLCSFYAEEGGLLMGYEID</sequence>
<dbReference type="EMBL" id="AE005672">
    <property type="protein sequence ID" value="AAK74881.1"/>
    <property type="molecule type" value="Genomic_DNA"/>
</dbReference>
<dbReference type="PIR" id="H95085">
    <property type="entry name" value="H95085"/>
</dbReference>
<dbReference type="RefSeq" id="WP_000219939.1">
    <property type="nucleotide sequence ID" value="NZ_CP155539.1"/>
</dbReference>
<dbReference type="SMR" id="Q97RQ6"/>
<dbReference type="PaxDb" id="170187-SP_0742"/>
<dbReference type="EnsemblBacteria" id="AAK74881">
    <property type="protein sequence ID" value="AAK74881"/>
    <property type="gene ID" value="SP_0742"/>
</dbReference>
<dbReference type="KEGG" id="spn:SP_0742"/>
<dbReference type="eggNOG" id="COG1307">
    <property type="taxonomic scope" value="Bacteria"/>
</dbReference>
<dbReference type="PhylomeDB" id="Q97RQ6"/>
<dbReference type="BioCyc" id="SPNE170187:G1FZB-758-MONOMER"/>
<dbReference type="Proteomes" id="UP000000585">
    <property type="component" value="Chromosome"/>
</dbReference>
<dbReference type="GO" id="GO:0008289">
    <property type="term" value="F:lipid binding"/>
    <property type="evidence" value="ECO:0007669"/>
    <property type="project" value="UniProtKB-KW"/>
</dbReference>
<dbReference type="Gene3D" id="3.30.1180.10">
    <property type="match status" value="1"/>
</dbReference>
<dbReference type="Gene3D" id="2.20.28.50">
    <property type="entry name" value="degv family protein"/>
    <property type="match status" value="1"/>
</dbReference>
<dbReference type="Gene3D" id="3.40.50.10440">
    <property type="entry name" value="Dihydroxyacetone kinase, domain 1"/>
    <property type="match status" value="1"/>
</dbReference>
<dbReference type="InterPro" id="IPR003797">
    <property type="entry name" value="DegV"/>
</dbReference>
<dbReference type="InterPro" id="IPR043168">
    <property type="entry name" value="DegV_C"/>
</dbReference>
<dbReference type="InterPro" id="IPR050270">
    <property type="entry name" value="DegV_domain_contain"/>
</dbReference>
<dbReference type="NCBIfam" id="TIGR00762">
    <property type="entry name" value="DegV"/>
    <property type="match status" value="1"/>
</dbReference>
<dbReference type="PANTHER" id="PTHR33434">
    <property type="entry name" value="DEGV DOMAIN-CONTAINING PROTEIN DR_1986-RELATED"/>
    <property type="match status" value="1"/>
</dbReference>
<dbReference type="PANTHER" id="PTHR33434:SF2">
    <property type="entry name" value="FATTY ACID-BINDING PROTEIN TM_1468"/>
    <property type="match status" value="1"/>
</dbReference>
<dbReference type="Pfam" id="PF02645">
    <property type="entry name" value="DegV"/>
    <property type="match status" value="1"/>
</dbReference>
<dbReference type="SUPFAM" id="SSF82549">
    <property type="entry name" value="DAK1/DegV-like"/>
    <property type="match status" value="1"/>
</dbReference>
<dbReference type="PROSITE" id="PS51482">
    <property type="entry name" value="DEGV"/>
    <property type="match status" value="1"/>
</dbReference>